<protein>
    <recommendedName>
        <fullName evidence="1">GTP 3',8-cyclase</fullName>
        <ecNumber evidence="1">4.1.99.22</ecNumber>
    </recommendedName>
    <alternativeName>
        <fullName evidence="1">Molybdenum cofactor biosynthesis protein A</fullName>
    </alternativeName>
</protein>
<sequence>MLVDSFNRVIDYIRVSVTKQCNFRCQYCMPTTPLDFFDDEELLPLDNVLEFLKIAIDEGVKKIRITGGEPLLRKGLDEFIAKLHAYNKEVALVLSTNGFSLKKMAKGLKDAGLSRVNVSLDSLKSDRVLKISQKDALKNTLEGIEESLKVGLKLKLNTVVMKGVNDDEILELLEYAKNRSIQIRYIEFMENTHAKSLVKGLKEKEILDLIAQKYKIMGMEKPKQGSSKIYTLENGYQFGIIAPHSDDFCQSCNRIRLASDGKICPCLYYQDAIDAKEAIINKDTKMMKRLLKQSIINKPEKNMWNDKNGGTPTRAFYYTGG</sequence>
<feature type="chain" id="PRO_0000152968" description="GTP 3',8-cyclase">
    <location>
        <begin position="1"/>
        <end position="321"/>
    </location>
</feature>
<feature type="domain" description="Radical SAM core" evidence="2">
    <location>
        <begin position="5"/>
        <end position="233"/>
    </location>
</feature>
<feature type="binding site" evidence="1">
    <location>
        <position position="14"/>
    </location>
    <ligand>
        <name>GTP</name>
        <dbReference type="ChEBI" id="CHEBI:37565"/>
    </ligand>
</feature>
<feature type="binding site" evidence="1">
    <location>
        <position position="21"/>
    </location>
    <ligand>
        <name>[4Fe-4S] cluster</name>
        <dbReference type="ChEBI" id="CHEBI:49883"/>
        <label>1</label>
        <note>4Fe-4S-S-AdoMet</note>
    </ligand>
</feature>
<feature type="binding site" evidence="1">
    <location>
        <position position="25"/>
    </location>
    <ligand>
        <name>[4Fe-4S] cluster</name>
        <dbReference type="ChEBI" id="CHEBI:49883"/>
        <label>1</label>
        <note>4Fe-4S-S-AdoMet</note>
    </ligand>
</feature>
<feature type="binding site" evidence="1">
    <location>
        <position position="27"/>
    </location>
    <ligand>
        <name>S-adenosyl-L-methionine</name>
        <dbReference type="ChEBI" id="CHEBI:59789"/>
    </ligand>
</feature>
<feature type="binding site" evidence="1">
    <location>
        <position position="28"/>
    </location>
    <ligand>
        <name>[4Fe-4S] cluster</name>
        <dbReference type="ChEBI" id="CHEBI:49883"/>
        <label>1</label>
        <note>4Fe-4S-S-AdoMet</note>
    </ligand>
</feature>
<feature type="binding site" evidence="1">
    <location>
        <position position="64"/>
    </location>
    <ligand>
        <name>GTP</name>
        <dbReference type="ChEBI" id="CHEBI:37565"/>
    </ligand>
</feature>
<feature type="binding site" evidence="1">
    <location>
        <position position="68"/>
    </location>
    <ligand>
        <name>S-adenosyl-L-methionine</name>
        <dbReference type="ChEBI" id="CHEBI:59789"/>
    </ligand>
</feature>
<feature type="binding site" evidence="1">
    <location>
        <position position="95"/>
    </location>
    <ligand>
        <name>GTP</name>
        <dbReference type="ChEBI" id="CHEBI:37565"/>
    </ligand>
</feature>
<feature type="binding site" evidence="1">
    <location>
        <position position="119"/>
    </location>
    <ligand>
        <name>S-adenosyl-L-methionine</name>
        <dbReference type="ChEBI" id="CHEBI:59789"/>
    </ligand>
</feature>
<feature type="binding site" evidence="1">
    <location>
        <position position="155"/>
    </location>
    <ligand>
        <name>GTP</name>
        <dbReference type="ChEBI" id="CHEBI:37565"/>
    </ligand>
</feature>
<feature type="binding site" evidence="1">
    <location>
        <position position="189"/>
    </location>
    <ligand>
        <name>S-adenosyl-L-methionine</name>
        <dbReference type="ChEBI" id="CHEBI:59789"/>
    </ligand>
</feature>
<feature type="binding site" evidence="1">
    <location>
        <position position="249"/>
    </location>
    <ligand>
        <name>[4Fe-4S] cluster</name>
        <dbReference type="ChEBI" id="CHEBI:49883"/>
        <label>2</label>
        <note>4Fe-4S-substrate</note>
    </ligand>
</feature>
<feature type="binding site" evidence="1">
    <location>
        <position position="252"/>
    </location>
    <ligand>
        <name>[4Fe-4S] cluster</name>
        <dbReference type="ChEBI" id="CHEBI:49883"/>
        <label>2</label>
        <note>4Fe-4S-substrate</note>
    </ligand>
</feature>
<feature type="binding site" evidence="1">
    <location>
        <begin position="254"/>
        <end position="256"/>
    </location>
    <ligand>
        <name>GTP</name>
        <dbReference type="ChEBI" id="CHEBI:37565"/>
    </ligand>
</feature>
<feature type="binding site" evidence="1">
    <location>
        <position position="266"/>
    </location>
    <ligand>
        <name>[4Fe-4S] cluster</name>
        <dbReference type="ChEBI" id="CHEBI:49883"/>
        <label>2</label>
        <note>4Fe-4S-substrate</note>
    </ligand>
</feature>
<proteinExistence type="inferred from homology"/>
<evidence type="ECO:0000255" key="1">
    <source>
        <dbReference type="HAMAP-Rule" id="MF_01225"/>
    </source>
</evidence>
<evidence type="ECO:0000255" key="2">
    <source>
        <dbReference type="PROSITE-ProRule" id="PRU01266"/>
    </source>
</evidence>
<accession>Q9ZL75</accession>
<gene>
    <name evidence="1" type="primary">moaA</name>
    <name type="ordered locus">jhp_0705</name>
</gene>
<organism>
    <name type="scientific">Helicobacter pylori (strain J99 / ATCC 700824)</name>
    <name type="common">Campylobacter pylori J99</name>
    <dbReference type="NCBI Taxonomy" id="85963"/>
    <lineage>
        <taxon>Bacteria</taxon>
        <taxon>Pseudomonadati</taxon>
        <taxon>Campylobacterota</taxon>
        <taxon>Epsilonproteobacteria</taxon>
        <taxon>Campylobacterales</taxon>
        <taxon>Helicobacteraceae</taxon>
        <taxon>Helicobacter</taxon>
    </lineage>
</organism>
<keyword id="KW-0004">4Fe-4S</keyword>
<keyword id="KW-0342">GTP-binding</keyword>
<keyword id="KW-0408">Iron</keyword>
<keyword id="KW-0411">Iron-sulfur</keyword>
<keyword id="KW-0456">Lyase</keyword>
<keyword id="KW-0479">Metal-binding</keyword>
<keyword id="KW-0501">Molybdenum cofactor biosynthesis</keyword>
<keyword id="KW-0547">Nucleotide-binding</keyword>
<keyword id="KW-0949">S-adenosyl-L-methionine</keyword>
<reference key="1">
    <citation type="journal article" date="1999" name="Nature">
        <title>Genomic sequence comparison of two unrelated isolates of the human gastric pathogen Helicobacter pylori.</title>
        <authorList>
            <person name="Alm R.A."/>
            <person name="Ling L.-S.L."/>
            <person name="Moir D.T."/>
            <person name="King B.L."/>
            <person name="Brown E.D."/>
            <person name="Doig P.C."/>
            <person name="Smith D.R."/>
            <person name="Noonan B."/>
            <person name="Guild B.C."/>
            <person name="deJonge B.L."/>
            <person name="Carmel G."/>
            <person name="Tummino P.J."/>
            <person name="Caruso A."/>
            <person name="Uria-Nickelsen M."/>
            <person name="Mills D.M."/>
            <person name="Ives C."/>
            <person name="Gibson R."/>
            <person name="Merberg D."/>
            <person name="Mills S.D."/>
            <person name="Jiang Q."/>
            <person name="Taylor D.E."/>
            <person name="Vovis G.F."/>
            <person name="Trust T.J."/>
        </authorList>
    </citation>
    <scope>NUCLEOTIDE SEQUENCE [LARGE SCALE GENOMIC DNA]</scope>
    <source>
        <strain>J99 / ATCC 700824</strain>
    </source>
</reference>
<comment type="function">
    <text evidence="1">Catalyzes the cyclization of GTP to (8S)-3',8-cyclo-7,8-dihydroguanosine 5'-triphosphate.</text>
</comment>
<comment type="catalytic activity">
    <reaction evidence="1">
        <text>GTP + AH2 + S-adenosyl-L-methionine = (8S)-3',8-cyclo-7,8-dihydroguanosine 5'-triphosphate + 5'-deoxyadenosine + L-methionine + A + H(+)</text>
        <dbReference type="Rhea" id="RHEA:49576"/>
        <dbReference type="ChEBI" id="CHEBI:13193"/>
        <dbReference type="ChEBI" id="CHEBI:15378"/>
        <dbReference type="ChEBI" id="CHEBI:17319"/>
        <dbReference type="ChEBI" id="CHEBI:17499"/>
        <dbReference type="ChEBI" id="CHEBI:37565"/>
        <dbReference type="ChEBI" id="CHEBI:57844"/>
        <dbReference type="ChEBI" id="CHEBI:59789"/>
        <dbReference type="ChEBI" id="CHEBI:131766"/>
        <dbReference type="EC" id="4.1.99.22"/>
    </reaction>
</comment>
<comment type="cofactor">
    <cofactor evidence="1">
        <name>[4Fe-4S] cluster</name>
        <dbReference type="ChEBI" id="CHEBI:49883"/>
    </cofactor>
    <text evidence="1">Binds 2 [4Fe-4S] clusters. Binds 1 [4Fe-4S] cluster coordinated with 3 cysteines and an exchangeable S-adenosyl-L-methionine and 1 [4Fe-4S] cluster coordinated with 3 cysteines and the GTP-derived substrate.</text>
</comment>
<comment type="pathway">
    <text evidence="1">Cofactor biosynthesis; molybdopterin biosynthesis.</text>
</comment>
<comment type="subunit">
    <text evidence="1">Monomer and homodimer.</text>
</comment>
<comment type="similarity">
    <text evidence="1">Belongs to the radical SAM superfamily. MoaA family.</text>
</comment>
<dbReference type="EC" id="4.1.99.22" evidence="1"/>
<dbReference type="EMBL" id="AE001439">
    <property type="protein sequence ID" value="AAD06280.1"/>
    <property type="molecule type" value="Genomic_DNA"/>
</dbReference>
<dbReference type="PIR" id="A71900">
    <property type="entry name" value="A71900"/>
</dbReference>
<dbReference type="RefSeq" id="WP_010882557.1">
    <property type="nucleotide sequence ID" value="NC_000921.1"/>
</dbReference>
<dbReference type="SMR" id="Q9ZL75"/>
<dbReference type="KEGG" id="hpj:jhp_0705"/>
<dbReference type="PATRIC" id="fig|85963.30.peg.272"/>
<dbReference type="eggNOG" id="COG2896">
    <property type="taxonomic scope" value="Bacteria"/>
</dbReference>
<dbReference type="UniPathway" id="UPA00344"/>
<dbReference type="Proteomes" id="UP000000804">
    <property type="component" value="Chromosome"/>
</dbReference>
<dbReference type="GO" id="GO:0051539">
    <property type="term" value="F:4 iron, 4 sulfur cluster binding"/>
    <property type="evidence" value="ECO:0007669"/>
    <property type="project" value="UniProtKB-UniRule"/>
</dbReference>
<dbReference type="GO" id="GO:0061799">
    <property type="term" value="F:cyclic pyranopterin monophosphate synthase activity"/>
    <property type="evidence" value="ECO:0007669"/>
    <property type="project" value="TreeGrafter"/>
</dbReference>
<dbReference type="GO" id="GO:0061798">
    <property type="term" value="F:GTP 3',8'-cyclase activity"/>
    <property type="evidence" value="ECO:0007669"/>
    <property type="project" value="UniProtKB-UniRule"/>
</dbReference>
<dbReference type="GO" id="GO:0005525">
    <property type="term" value="F:GTP binding"/>
    <property type="evidence" value="ECO:0007669"/>
    <property type="project" value="UniProtKB-UniRule"/>
</dbReference>
<dbReference type="GO" id="GO:0046872">
    <property type="term" value="F:metal ion binding"/>
    <property type="evidence" value="ECO:0007669"/>
    <property type="project" value="UniProtKB-KW"/>
</dbReference>
<dbReference type="GO" id="GO:1904047">
    <property type="term" value="F:S-adenosyl-L-methionine binding"/>
    <property type="evidence" value="ECO:0007669"/>
    <property type="project" value="UniProtKB-UniRule"/>
</dbReference>
<dbReference type="GO" id="GO:0006777">
    <property type="term" value="P:Mo-molybdopterin cofactor biosynthetic process"/>
    <property type="evidence" value="ECO:0007669"/>
    <property type="project" value="UniProtKB-UniRule"/>
</dbReference>
<dbReference type="CDD" id="cd01335">
    <property type="entry name" value="Radical_SAM"/>
    <property type="match status" value="1"/>
</dbReference>
<dbReference type="CDD" id="cd21117">
    <property type="entry name" value="Twitch_MoaA"/>
    <property type="match status" value="1"/>
</dbReference>
<dbReference type="Gene3D" id="3.20.20.70">
    <property type="entry name" value="Aldolase class I"/>
    <property type="match status" value="1"/>
</dbReference>
<dbReference type="HAMAP" id="MF_01225_B">
    <property type="entry name" value="MoaA_B"/>
    <property type="match status" value="1"/>
</dbReference>
<dbReference type="InterPro" id="IPR013785">
    <property type="entry name" value="Aldolase_TIM"/>
</dbReference>
<dbReference type="InterPro" id="IPR006638">
    <property type="entry name" value="Elp3/MiaA/NifB-like_rSAM"/>
</dbReference>
<dbReference type="InterPro" id="IPR013483">
    <property type="entry name" value="MoaA"/>
</dbReference>
<dbReference type="InterPro" id="IPR000385">
    <property type="entry name" value="MoaA_NifB_PqqE_Fe-S-bd_CS"/>
</dbReference>
<dbReference type="InterPro" id="IPR010505">
    <property type="entry name" value="MoaA_twitch"/>
</dbReference>
<dbReference type="InterPro" id="IPR050105">
    <property type="entry name" value="MoCo_biosynth_MoaA/MoaC"/>
</dbReference>
<dbReference type="InterPro" id="IPR007197">
    <property type="entry name" value="rSAM"/>
</dbReference>
<dbReference type="NCBIfam" id="TIGR02666">
    <property type="entry name" value="moaA"/>
    <property type="match status" value="1"/>
</dbReference>
<dbReference type="PANTHER" id="PTHR22960:SF0">
    <property type="entry name" value="MOLYBDENUM COFACTOR BIOSYNTHESIS PROTEIN 1"/>
    <property type="match status" value="1"/>
</dbReference>
<dbReference type="PANTHER" id="PTHR22960">
    <property type="entry name" value="MOLYBDOPTERIN COFACTOR SYNTHESIS PROTEIN A"/>
    <property type="match status" value="1"/>
</dbReference>
<dbReference type="Pfam" id="PF13353">
    <property type="entry name" value="Fer4_12"/>
    <property type="match status" value="1"/>
</dbReference>
<dbReference type="Pfam" id="PF06463">
    <property type="entry name" value="Mob_synth_C"/>
    <property type="match status" value="1"/>
</dbReference>
<dbReference type="Pfam" id="PF04055">
    <property type="entry name" value="Radical_SAM"/>
    <property type="match status" value="1"/>
</dbReference>
<dbReference type="SFLD" id="SFLDG01383">
    <property type="entry name" value="cyclic_pyranopterin_phosphate"/>
    <property type="match status" value="1"/>
</dbReference>
<dbReference type="SFLD" id="SFLDS00029">
    <property type="entry name" value="Radical_SAM"/>
    <property type="match status" value="1"/>
</dbReference>
<dbReference type="SMART" id="SM00729">
    <property type="entry name" value="Elp3"/>
    <property type="match status" value="1"/>
</dbReference>
<dbReference type="SUPFAM" id="SSF102114">
    <property type="entry name" value="Radical SAM enzymes"/>
    <property type="match status" value="1"/>
</dbReference>
<dbReference type="PROSITE" id="PS01305">
    <property type="entry name" value="MOAA_NIFB_PQQE"/>
    <property type="match status" value="1"/>
</dbReference>
<dbReference type="PROSITE" id="PS51918">
    <property type="entry name" value="RADICAL_SAM"/>
    <property type="match status" value="1"/>
</dbReference>
<name>MOAA_HELPJ</name>